<accession>B3QL00</accession>
<reference key="1">
    <citation type="submission" date="2008-06" db="EMBL/GenBank/DDBJ databases">
        <title>Complete sequence of Chlorobaculum parvum NCIB 8327.</title>
        <authorList>
            <consortium name="US DOE Joint Genome Institute"/>
            <person name="Lucas S."/>
            <person name="Copeland A."/>
            <person name="Lapidus A."/>
            <person name="Glavina del Rio T."/>
            <person name="Dalin E."/>
            <person name="Tice H."/>
            <person name="Bruce D."/>
            <person name="Goodwin L."/>
            <person name="Pitluck S."/>
            <person name="Schmutz J."/>
            <person name="Larimer F."/>
            <person name="Land M."/>
            <person name="Hauser L."/>
            <person name="Kyrpides N."/>
            <person name="Mikhailova N."/>
            <person name="Zhao F."/>
            <person name="Li T."/>
            <person name="Liu Z."/>
            <person name="Overmann J."/>
            <person name="Bryant D.A."/>
            <person name="Richardson P."/>
        </authorList>
    </citation>
    <scope>NUCLEOTIDE SEQUENCE [LARGE SCALE GENOMIC DNA]</scope>
    <source>
        <strain>DSM 263 / NCIMB 8327</strain>
    </source>
</reference>
<name>MEND_CHLP8</name>
<sequence>MNHKQITTLWCRVIVEELIRQGAGFFCISPGSRSTPLTLAVAANPNARFRMFPDERSAGFYALGYARAAGKPAVLVCTSGTAVANYFPAVVEASADAQPMLVLSADRPFELLDAGANQTIRQQDIFGSYTRWNLELPEPGTGTPLASLLSTVGQAVKRSLGSPAGPVHLNLPFREPLEPESHDLAHPWVEPLRNWLASEQPWCRFEQPRTAPDANALTALQQILANAERPLFVAGSMDKADDAEAVASLADSLGILLFADLTSGLRLTNKCTPWQLAFQNETFATSFKPDVVIHFGGALIGKQPAMTLRKEPPFHYVVVRNHPGRFNPDHNVTLSIEASPAAVVSALSECRKPAEMGGFAALFSEVAHTIDTAACAPDEPVNEISAPRIVSSLTDGKHALFVANSMPARDMDLYAAPVSEKPLRVELNRGVSGIDGIISTAAGFSAGLDKPTTLLIGDISFLHDLNALSLLDNPTNPLIVIVLNNNGGGIFSFLPIASQTDRLDECFATPQNFSIESAARTFDLDYASPASNREFTELYADALKRNKSLVIEIRSNRQANLLLHRTLKAKLDPIFEKAGIFGN</sequence>
<feature type="chain" id="PRO_1000187061" description="2-succinyl-5-enolpyruvyl-6-hydroxy-3-cyclohexene-1-carboxylate synthase">
    <location>
        <begin position="1"/>
        <end position="583"/>
    </location>
</feature>
<keyword id="KW-0460">Magnesium</keyword>
<keyword id="KW-0464">Manganese</keyword>
<keyword id="KW-0474">Menaquinone biosynthesis</keyword>
<keyword id="KW-0479">Metal-binding</keyword>
<keyword id="KW-0786">Thiamine pyrophosphate</keyword>
<keyword id="KW-0808">Transferase</keyword>
<protein>
    <recommendedName>
        <fullName evidence="1">2-succinyl-5-enolpyruvyl-6-hydroxy-3-cyclohexene-1-carboxylate synthase</fullName>
        <shortName evidence="1">SEPHCHC synthase</shortName>
        <ecNumber evidence="1">2.2.1.9</ecNumber>
    </recommendedName>
    <alternativeName>
        <fullName evidence="1">Menaquinone biosynthesis protein MenD</fullName>
    </alternativeName>
</protein>
<comment type="function">
    <text evidence="1">Catalyzes the thiamine diphosphate-dependent decarboxylation of 2-oxoglutarate and the subsequent addition of the resulting succinic semialdehyde-thiamine pyrophosphate anion to isochorismate to yield 2-succinyl-5-enolpyruvyl-6-hydroxy-3-cyclohexene-1-carboxylate (SEPHCHC).</text>
</comment>
<comment type="catalytic activity">
    <reaction evidence="1">
        <text>isochorismate + 2-oxoglutarate + H(+) = 5-enolpyruvoyl-6-hydroxy-2-succinyl-cyclohex-3-ene-1-carboxylate + CO2</text>
        <dbReference type="Rhea" id="RHEA:25593"/>
        <dbReference type="ChEBI" id="CHEBI:15378"/>
        <dbReference type="ChEBI" id="CHEBI:16526"/>
        <dbReference type="ChEBI" id="CHEBI:16810"/>
        <dbReference type="ChEBI" id="CHEBI:29780"/>
        <dbReference type="ChEBI" id="CHEBI:58818"/>
        <dbReference type="EC" id="2.2.1.9"/>
    </reaction>
</comment>
<comment type="cofactor">
    <cofactor evidence="1">
        <name>Mg(2+)</name>
        <dbReference type="ChEBI" id="CHEBI:18420"/>
    </cofactor>
    <cofactor evidence="1">
        <name>Mn(2+)</name>
        <dbReference type="ChEBI" id="CHEBI:29035"/>
    </cofactor>
</comment>
<comment type="cofactor">
    <cofactor evidence="1">
        <name>thiamine diphosphate</name>
        <dbReference type="ChEBI" id="CHEBI:58937"/>
    </cofactor>
    <text evidence="1">Binds 1 thiamine pyrophosphate per subunit.</text>
</comment>
<comment type="pathway">
    <text evidence="1">Quinol/quinone metabolism; 1,4-dihydroxy-2-naphthoate biosynthesis; 1,4-dihydroxy-2-naphthoate from chorismate: step 2/7.</text>
</comment>
<comment type="pathway">
    <text evidence="1">Quinol/quinone metabolism; menaquinone biosynthesis.</text>
</comment>
<comment type="subunit">
    <text evidence="1">Homodimer.</text>
</comment>
<comment type="similarity">
    <text evidence="1">Belongs to the TPP enzyme family. MenD subfamily.</text>
</comment>
<dbReference type="EC" id="2.2.1.9" evidence="1"/>
<dbReference type="EMBL" id="CP001099">
    <property type="protein sequence ID" value="ACF10788.1"/>
    <property type="molecule type" value="Genomic_DNA"/>
</dbReference>
<dbReference type="RefSeq" id="WP_012501621.1">
    <property type="nucleotide sequence ID" value="NC_011027.1"/>
</dbReference>
<dbReference type="SMR" id="B3QL00"/>
<dbReference type="STRING" id="517417.Cpar_0364"/>
<dbReference type="KEGG" id="cpc:Cpar_0364"/>
<dbReference type="eggNOG" id="COG1165">
    <property type="taxonomic scope" value="Bacteria"/>
</dbReference>
<dbReference type="HOGENOM" id="CLU_006051_3_0_10"/>
<dbReference type="UniPathway" id="UPA00079"/>
<dbReference type="UniPathway" id="UPA01057">
    <property type="reaction ID" value="UER00164"/>
</dbReference>
<dbReference type="Proteomes" id="UP000008811">
    <property type="component" value="Chromosome"/>
</dbReference>
<dbReference type="GO" id="GO:0070204">
    <property type="term" value="F:2-succinyl-5-enolpyruvyl-6-hydroxy-3-cyclohexene-1-carboxylic-acid synthase activity"/>
    <property type="evidence" value="ECO:0007669"/>
    <property type="project" value="UniProtKB-UniRule"/>
</dbReference>
<dbReference type="GO" id="GO:0000287">
    <property type="term" value="F:magnesium ion binding"/>
    <property type="evidence" value="ECO:0007669"/>
    <property type="project" value="UniProtKB-UniRule"/>
</dbReference>
<dbReference type="GO" id="GO:0030145">
    <property type="term" value="F:manganese ion binding"/>
    <property type="evidence" value="ECO:0007669"/>
    <property type="project" value="UniProtKB-UniRule"/>
</dbReference>
<dbReference type="GO" id="GO:0030976">
    <property type="term" value="F:thiamine pyrophosphate binding"/>
    <property type="evidence" value="ECO:0007669"/>
    <property type="project" value="UniProtKB-UniRule"/>
</dbReference>
<dbReference type="GO" id="GO:0009234">
    <property type="term" value="P:menaquinone biosynthetic process"/>
    <property type="evidence" value="ECO:0007669"/>
    <property type="project" value="UniProtKB-UniRule"/>
</dbReference>
<dbReference type="CDD" id="cd07037">
    <property type="entry name" value="TPP_PYR_MenD"/>
    <property type="match status" value="1"/>
</dbReference>
<dbReference type="CDD" id="cd02009">
    <property type="entry name" value="TPP_SHCHC_synthase"/>
    <property type="match status" value="1"/>
</dbReference>
<dbReference type="Gene3D" id="3.40.50.970">
    <property type="match status" value="2"/>
</dbReference>
<dbReference type="Gene3D" id="3.40.50.1220">
    <property type="entry name" value="TPP-binding domain"/>
    <property type="match status" value="1"/>
</dbReference>
<dbReference type="HAMAP" id="MF_01659">
    <property type="entry name" value="MenD"/>
    <property type="match status" value="1"/>
</dbReference>
<dbReference type="InterPro" id="IPR029035">
    <property type="entry name" value="DHS-like_NAD/FAD-binding_dom"/>
</dbReference>
<dbReference type="InterPro" id="IPR004433">
    <property type="entry name" value="MenaQ_synth_MenD"/>
</dbReference>
<dbReference type="InterPro" id="IPR032264">
    <property type="entry name" value="MenD_middle"/>
</dbReference>
<dbReference type="InterPro" id="IPR029061">
    <property type="entry name" value="THDP-binding"/>
</dbReference>
<dbReference type="InterPro" id="IPR012001">
    <property type="entry name" value="Thiamin_PyroP_enz_TPP-bd_dom"/>
</dbReference>
<dbReference type="InterPro" id="IPR011766">
    <property type="entry name" value="TPP_enzyme_TPP-bd"/>
</dbReference>
<dbReference type="NCBIfam" id="TIGR00173">
    <property type="entry name" value="menD"/>
    <property type="match status" value="1"/>
</dbReference>
<dbReference type="PANTHER" id="PTHR42916">
    <property type="entry name" value="2-SUCCINYL-5-ENOLPYRUVYL-6-HYDROXY-3-CYCLOHEXENE-1-CARBOXYLATE SYNTHASE"/>
    <property type="match status" value="1"/>
</dbReference>
<dbReference type="PANTHER" id="PTHR42916:SF1">
    <property type="entry name" value="PROTEIN PHYLLO, CHLOROPLASTIC"/>
    <property type="match status" value="1"/>
</dbReference>
<dbReference type="Pfam" id="PF02775">
    <property type="entry name" value="TPP_enzyme_C"/>
    <property type="match status" value="1"/>
</dbReference>
<dbReference type="Pfam" id="PF16582">
    <property type="entry name" value="TPP_enzyme_M_2"/>
    <property type="match status" value="1"/>
</dbReference>
<dbReference type="Pfam" id="PF02776">
    <property type="entry name" value="TPP_enzyme_N"/>
    <property type="match status" value="1"/>
</dbReference>
<dbReference type="PIRSF" id="PIRSF004983">
    <property type="entry name" value="MenD"/>
    <property type="match status" value="1"/>
</dbReference>
<dbReference type="SUPFAM" id="SSF52467">
    <property type="entry name" value="DHS-like NAD/FAD-binding domain"/>
    <property type="match status" value="1"/>
</dbReference>
<dbReference type="SUPFAM" id="SSF52518">
    <property type="entry name" value="Thiamin diphosphate-binding fold (THDP-binding)"/>
    <property type="match status" value="2"/>
</dbReference>
<proteinExistence type="inferred from homology"/>
<evidence type="ECO:0000255" key="1">
    <source>
        <dbReference type="HAMAP-Rule" id="MF_01659"/>
    </source>
</evidence>
<organism>
    <name type="scientific">Chlorobaculum parvum (strain DSM 263 / NCIMB 8327)</name>
    <name type="common">Chlorobium vibrioforme subsp. thiosulfatophilum</name>
    <dbReference type="NCBI Taxonomy" id="517417"/>
    <lineage>
        <taxon>Bacteria</taxon>
        <taxon>Pseudomonadati</taxon>
        <taxon>Chlorobiota</taxon>
        <taxon>Chlorobiia</taxon>
        <taxon>Chlorobiales</taxon>
        <taxon>Chlorobiaceae</taxon>
        <taxon>Chlorobaculum</taxon>
    </lineage>
</organism>
<gene>
    <name evidence="1" type="primary">menD</name>
    <name type="ordered locus">Cpar_0364</name>
</gene>